<organism>
    <name type="scientific">Oryza sativa subsp. japonica</name>
    <name type="common">Rice</name>
    <dbReference type="NCBI Taxonomy" id="39947"/>
    <lineage>
        <taxon>Eukaryota</taxon>
        <taxon>Viridiplantae</taxon>
        <taxon>Streptophyta</taxon>
        <taxon>Embryophyta</taxon>
        <taxon>Tracheophyta</taxon>
        <taxon>Spermatophyta</taxon>
        <taxon>Magnoliopsida</taxon>
        <taxon>Liliopsida</taxon>
        <taxon>Poales</taxon>
        <taxon>Poaceae</taxon>
        <taxon>BOP clade</taxon>
        <taxon>Oryzoideae</taxon>
        <taxon>Oryzeae</taxon>
        <taxon>Oryzinae</taxon>
        <taxon>Oryza</taxon>
        <taxon>Oryza sativa</taxon>
    </lineage>
</organism>
<keyword id="KW-1069">Brassinosteroid biosynthesis</keyword>
<keyword id="KW-0349">Heme</keyword>
<keyword id="KW-0408">Iron</keyword>
<keyword id="KW-0444">Lipid biosynthesis</keyword>
<keyword id="KW-0443">Lipid metabolism</keyword>
<keyword id="KW-0472">Membrane</keyword>
<keyword id="KW-0479">Metal-binding</keyword>
<keyword id="KW-0503">Monooxygenase</keyword>
<keyword id="KW-0560">Oxidoreductase</keyword>
<keyword id="KW-1185">Reference proteome</keyword>
<keyword id="KW-0752">Steroid biosynthesis</keyword>
<keyword id="KW-0812">Transmembrane</keyword>
<keyword id="KW-1133">Transmembrane helix</keyword>
<sequence>MVGGELVLAALVILLALLLTLVLSHFLPLLLNPKAPKGSFGWPLLGETLRFLSPHASNTLGSFLEDHCSRYGRVFKSHLFCTPTIVSCDQELNHFILQNEERLFQCSYPRPIHGILGKSSMLVVLGEDHKRLRNLALALVTSTKLKPSYLGDIEKIALHIVGSWHGKSKDKGMVNVIAFCEEARKFAFSVIVKQVLGLSPEEPVTAMILEDFLAFMKGLISFPLYIPGTPYAKAVQARARISSTVKGIIEERRNAGSSNKGDFLDVLLSSNELSDEEKVSFVLDSLLGGYETTSLLISMVVYFLGQSAQDLELVKREHEGIRSKKEKDEFLSSEDYKKMEYTQHVINEALRCGNIVKFVHRKALKDVRYKEYLIPSGWKVLPVFSAVHLNPLLHGNAQQFQPCRWEGASQGTSKKFTPFGGGPRLCPGSELAKVEAAFFLHHLVLNYRWRIDGDDIPMAYPYVEFQRGLPIEIEPLCSES</sequence>
<protein>
    <recommendedName>
        <fullName evidence="5">Cytochrome P450 724B1</fullName>
        <shortName evidence="5">OsCYP724B1</shortName>
    </recommendedName>
    <alternativeName>
        <fullName evidence="6">(22S)-22-hydroxycampesterol synthase</fullName>
        <ecNumber evidence="4">1.14.14.-</ecNumber>
    </alternativeName>
    <alternativeName>
        <fullName evidence="5">Dwarf protein 11</fullName>
        <shortName evidence="5">OsDWARF11</shortName>
    </alternativeName>
</protein>
<feature type="chain" id="PRO_0000052201" description="Cytochrome P450 724B1">
    <location>
        <begin position="1"/>
        <end position="480"/>
    </location>
</feature>
<feature type="transmembrane region" description="Helical" evidence="2">
    <location>
        <begin position="6"/>
        <end position="26"/>
    </location>
</feature>
<feature type="binding site" description="axial binding residue" evidence="1">
    <location>
        <position position="426"/>
    </location>
    <ligand>
        <name>heme</name>
        <dbReference type="ChEBI" id="CHEBI:30413"/>
    </ligand>
    <ligandPart>
        <name>Fe</name>
        <dbReference type="ChEBI" id="CHEBI:18248"/>
    </ligandPart>
</feature>
<feature type="mutagenesis site" description="In d11-3; dwarf and reduced seed length." evidence="3">
    <original>T</original>
    <variation>I</variation>
    <location>
        <position position="292"/>
    </location>
</feature>
<accession>Q6F4F5</accession>
<accession>Q01JN4</accession>
<accession>Q0JCH6</accession>
<accession>Q7XJU4</accession>
<proteinExistence type="evidence at protein level"/>
<name>C724B_ORYSJ</name>
<dbReference type="EC" id="1.14.14.-" evidence="4"/>
<dbReference type="EMBL" id="AB158759">
    <property type="protein sequence ID" value="BAD27424.1"/>
    <property type="molecule type" value="mRNA"/>
</dbReference>
<dbReference type="EMBL" id="AL606588">
    <property type="protein sequence ID" value="CAE06016.1"/>
    <property type="status" value="ALT_SEQ"/>
    <property type="molecule type" value="Genomic_DNA"/>
</dbReference>
<dbReference type="EMBL" id="CR855166">
    <property type="protein sequence ID" value="CAH67041.1"/>
    <property type="molecule type" value="Genomic_DNA"/>
</dbReference>
<dbReference type="EMBL" id="AP008210">
    <property type="protein sequence ID" value="BAF14961.1"/>
    <property type="molecule type" value="Genomic_DNA"/>
</dbReference>
<dbReference type="EMBL" id="AP014960">
    <property type="protein sequence ID" value="BAS89632.1"/>
    <property type="molecule type" value="Genomic_DNA"/>
</dbReference>
<dbReference type="EMBL" id="CM000141">
    <property type="protein sequence ID" value="EEE61161.1"/>
    <property type="molecule type" value="Genomic_DNA"/>
</dbReference>
<dbReference type="EMBL" id="AK106528">
    <property type="protein sequence ID" value="BAG97751.1"/>
    <property type="molecule type" value="mRNA"/>
</dbReference>
<dbReference type="EMBL" id="AK119772">
    <property type="protein sequence ID" value="BAG99780.1"/>
    <property type="molecule type" value="mRNA"/>
</dbReference>
<dbReference type="RefSeq" id="XP_015635418.1">
    <property type="nucleotide sequence ID" value="XM_015779932.1"/>
</dbReference>
<dbReference type="SMR" id="Q6F4F5"/>
<dbReference type="FunCoup" id="Q6F4F5">
    <property type="interactions" value="223"/>
</dbReference>
<dbReference type="STRING" id="39947.Q6F4F5"/>
<dbReference type="PaxDb" id="39947-Q6F4F5"/>
<dbReference type="EnsemblPlants" id="Os04t0469800-01">
    <property type="protein sequence ID" value="Os04t0469800-01"/>
    <property type="gene ID" value="Os04g0469800"/>
</dbReference>
<dbReference type="Gramene" id="Os04t0469800-01">
    <property type="protein sequence ID" value="Os04t0469800-01"/>
    <property type="gene ID" value="Os04g0469800"/>
</dbReference>
<dbReference type="KEGG" id="dosa:Os04g0469800"/>
<dbReference type="eggNOG" id="KOG0157">
    <property type="taxonomic scope" value="Eukaryota"/>
</dbReference>
<dbReference type="HOGENOM" id="CLU_001570_15_5_1"/>
<dbReference type="InParanoid" id="Q6F4F5"/>
<dbReference type="OMA" id="PWRWETQ"/>
<dbReference type="OrthoDB" id="3945418at2759"/>
<dbReference type="UniPathway" id="UPA00381"/>
<dbReference type="Proteomes" id="UP000000763">
    <property type="component" value="Chromosome 4"/>
</dbReference>
<dbReference type="Proteomes" id="UP000007752">
    <property type="component" value="Chromosome 4"/>
</dbReference>
<dbReference type="Proteomes" id="UP000059680">
    <property type="component" value="Chromosome 4"/>
</dbReference>
<dbReference type="ExpressionAtlas" id="Q6F4F5">
    <property type="expression patterns" value="baseline and differential"/>
</dbReference>
<dbReference type="GO" id="GO:0016020">
    <property type="term" value="C:membrane"/>
    <property type="evidence" value="ECO:0007669"/>
    <property type="project" value="UniProtKB-SubCell"/>
</dbReference>
<dbReference type="GO" id="GO:0020037">
    <property type="term" value="F:heme binding"/>
    <property type="evidence" value="ECO:0007669"/>
    <property type="project" value="InterPro"/>
</dbReference>
<dbReference type="GO" id="GO:0005506">
    <property type="term" value="F:iron ion binding"/>
    <property type="evidence" value="ECO:0007669"/>
    <property type="project" value="InterPro"/>
</dbReference>
<dbReference type="GO" id="GO:0004497">
    <property type="term" value="F:monooxygenase activity"/>
    <property type="evidence" value="ECO:0000318"/>
    <property type="project" value="GO_Central"/>
</dbReference>
<dbReference type="GO" id="GO:0016705">
    <property type="term" value="F:oxidoreductase activity, acting on paired donors, with incorporation or reduction of molecular oxygen"/>
    <property type="evidence" value="ECO:0007669"/>
    <property type="project" value="InterPro"/>
</dbReference>
<dbReference type="GO" id="GO:0016132">
    <property type="term" value="P:brassinosteroid biosynthetic process"/>
    <property type="evidence" value="ECO:0000315"/>
    <property type="project" value="Gramene"/>
</dbReference>
<dbReference type="GO" id="GO:0010268">
    <property type="term" value="P:brassinosteroid homeostasis"/>
    <property type="evidence" value="ECO:0000318"/>
    <property type="project" value="GO_Central"/>
</dbReference>
<dbReference type="GO" id="GO:0009647">
    <property type="term" value="P:skotomorphogenesis"/>
    <property type="evidence" value="ECO:0000315"/>
    <property type="project" value="Gramene"/>
</dbReference>
<dbReference type="CDD" id="cd11043">
    <property type="entry name" value="CYP90-like"/>
    <property type="match status" value="1"/>
</dbReference>
<dbReference type="FunFam" id="1.10.630.10:FF:000057">
    <property type="entry name" value="Cytochrome P450 724B1"/>
    <property type="match status" value="1"/>
</dbReference>
<dbReference type="Gene3D" id="1.10.630.10">
    <property type="entry name" value="Cytochrome P450"/>
    <property type="match status" value="1"/>
</dbReference>
<dbReference type="InterPro" id="IPR001128">
    <property type="entry name" value="Cyt_P450"/>
</dbReference>
<dbReference type="InterPro" id="IPR017972">
    <property type="entry name" value="Cyt_P450_CS"/>
</dbReference>
<dbReference type="InterPro" id="IPR002401">
    <property type="entry name" value="Cyt_P450_E_grp-I"/>
</dbReference>
<dbReference type="InterPro" id="IPR036396">
    <property type="entry name" value="Cyt_P450_sf"/>
</dbReference>
<dbReference type="PANTHER" id="PTHR24286">
    <property type="entry name" value="CYTOCHROME P450 26"/>
    <property type="match status" value="1"/>
</dbReference>
<dbReference type="PANTHER" id="PTHR24286:SF37">
    <property type="entry name" value="CYTOCHROME P450 724B1"/>
    <property type="match status" value="1"/>
</dbReference>
<dbReference type="Pfam" id="PF00067">
    <property type="entry name" value="p450"/>
    <property type="match status" value="1"/>
</dbReference>
<dbReference type="PRINTS" id="PR00463">
    <property type="entry name" value="EP450I"/>
</dbReference>
<dbReference type="PRINTS" id="PR00385">
    <property type="entry name" value="P450"/>
</dbReference>
<dbReference type="SUPFAM" id="SSF48264">
    <property type="entry name" value="Cytochrome P450"/>
    <property type="match status" value="1"/>
</dbReference>
<dbReference type="PROSITE" id="PS00086">
    <property type="entry name" value="CYTOCHROME_P450"/>
    <property type="match status" value="1"/>
</dbReference>
<gene>
    <name evidence="5" type="primary">CYP724B1</name>
    <name evidence="5" type="synonym">D11</name>
    <name evidence="7" type="ordered locus">Os04g0469800</name>
    <name evidence="7" type="ordered locus">LOC_Os04g39430</name>
    <name evidence="9" type="ORF">OSIGBa0124N08.3</name>
    <name evidence="10" type="ORF">OsJ_15129</name>
    <name evidence="8" type="ORF">OSJNBa0016O02.25</name>
</gene>
<comment type="function">
    <text evidence="3 4">Involved in brassinosteroid biosynthesis (PubMed:15705958, PubMed:16369540). May catalyze a C6-oxidation step and may be involved to supply 6-deoxotyphasterol and typhasterol (PubMed:15705958). Involved in internode elongation and seed development (PubMed:15705958). Catalyzes the conversion of campesterol (CR) to (22S)-22-hydroxycampesterol (22-OHCR, 22-hydroxyCR) (PubMed:16369540).</text>
</comment>
<comment type="catalytic activity">
    <reaction evidence="4">
        <text>campesterol + reduced [NADPH--hemoprotein reductase] + O2 = (22S)-22-hydroxycampesterol + oxidized [NADPH--hemoprotein reductase] + H2O + H(+)</text>
        <dbReference type="Rhea" id="RHEA:69835"/>
        <dbReference type="Rhea" id="RHEA-COMP:11964"/>
        <dbReference type="Rhea" id="RHEA-COMP:11965"/>
        <dbReference type="ChEBI" id="CHEBI:15377"/>
        <dbReference type="ChEBI" id="CHEBI:15378"/>
        <dbReference type="ChEBI" id="CHEBI:15379"/>
        <dbReference type="ChEBI" id="CHEBI:28623"/>
        <dbReference type="ChEBI" id="CHEBI:57618"/>
        <dbReference type="ChEBI" id="CHEBI:58210"/>
        <dbReference type="ChEBI" id="CHEBI:72331"/>
    </reaction>
    <physiologicalReaction direction="left-to-right" evidence="4">
        <dbReference type="Rhea" id="RHEA:69836"/>
    </physiologicalReaction>
</comment>
<comment type="cofactor">
    <cofactor evidence="1">
        <name>heme</name>
        <dbReference type="ChEBI" id="CHEBI:30413"/>
    </cofactor>
</comment>
<comment type="pathway">
    <text evidence="4">Plant hormone biosynthesis; brassinosteroid biosynthesis.</text>
</comment>
<comment type="subcellular location">
    <subcellularLocation>
        <location evidence="2">Membrane</location>
        <topology evidence="2">Single-pass membrane protein</topology>
    </subcellularLocation>
</comment>
<comment type="tissue specificity">
    <text evidence="3">Ubiquitously expressed at low levels, but preferentially in the internodes and the florets before flowering.</text>
</comment>
<comment type="induction">
    <text evidence="3">Down-regulated by brassinolide in wild-type and the dwarf11 mutant.</text>
</comment>
<comment type="disruption phenotype">
    <text evidence="3">The dwarf11 (d11) mutant shows the erection of leaves in mature stages, the shortening of the grain length and of the second internode in culm, and aberrant skotomorphogenesis. Treatment with exogenous brassinolide rescues the abnormal phenotype.</text>
</comment>
<comment type="similarity">
    <text evidence="7">Belongs to the cytochrome P450 family.</text>
</comment>
<comment type="sequence caution" evidence="7">
    <conflict type="erroneous gene model prediction">
        <sequence resource="EMBL-CDS" id="CAE06016"/>
    </conflict>
</comment>
<reference key="1">
    <citation type="journal article" date="2005" name="Plant Cell">
        <title>A novel cytochrome p450 is implicated in brassinosteroid biosynthesis via the characterization of a rice dwarf mutant, dwarf11, with reduced seed length.</title>
        <authorList>
            <person name="Tanabe S."/>
            <person name="Ashikari M."/>
            <person name="Fujioka S."/>
            <person name="Takatsuto S."/>
            <person name="Yoshida S."/>
            <person name="Yano M."/>
            <person name="Yoshimura A."/>
            <person name="Kitano H."/>
            <person name="Matsuoka M."/>
            <person name="Fujisawa Y."/>
            <person name="Kato H."/>
            <person name="Iwasaki Y."/>
        </authorList>
    </citation>
    <scope>NUCLEOTIDE SEQUENCE [MRNA]</scope>
    <scope>FUNCTION</scope>
    <scope>TISSUE SPECIFICITY</scope>
    <scope>INDUCTION</scope>
    <scope>MUTAGENESIS OF THR-292</scope>
    <scope>DISRUPTION PHENOTYPE</scope>
    <source>
        <strain>cv. Nipponbare</strain>
    </source>
</reference>
<reference key="2">
    <citation type="journal article" date="2002" name="Nature">
        <title>Sequence and analysis of rice chromosome 4.</title>
        <authorList>
            <person name="Feng Q."/>
            <person name="Zhang Y."/>
            <person name="Hao P."/>
            <person name="Wang S."/>
            <person name="Fu G."/>
            <person name="Huang Y."/>
            <person name="Li Y."/>
            <person name="Zhu J."/>
            <person name="Liu Y."/>
            <person name="Hu X."/>
            <person name="Jia P."/>
            <person name="Zhang Y."/>
            <person name="Zhao Q."/>
            <person name="Ying K."/>
            <person name="Yu S."/>
            <person name="Tang Y."/>
            <person name="Weng Q."/>
            <person name="Zhang L."/>
            <person name="Lu Y."/>
            <person name="Mu J."/>
            <person name="Lu Y."/>
            <person name="Zhang L.S."/>
            <person name="Yu Z."/>
            <person name="Fan D."/>
            <person name="Liu X."/>
            <person name="Lu T."/>
            <person name="Li C."/>
            <person name="Wu Y."/>
            <person name="Sun T."/>
            <person name="Lei H."/>
            <person name="Li T."/>
            <person name="Hu H."/>
            <person name="Guan J."/>
            <person name="Wu M."/>
            <person name="Zhang R."/>
            <person name="Zhou B."/>
            <person name="Chen Z."/>
            <person name="Chen L."/>
            <person name="Jin Z."/>
            <person name="Wang R."/>
            <person name="Yin H."/>
            <person name="Cai Z."/>
            <person name="Ren S."/>
            <person name="Lv G."/>
            <person name="Gu W."/>
            <person name="Zhu G."/>
            <person name="Tu Y."/>
            <person name="Jia J."/>
            <person name="Zhang Y."/>
            <person name="Chen J."/>
            <person name="Kang H."/>
            <person name="Chen X."/>
            <person name="Shao C."/>
            <person name="Sun Y."/>
            <person name="Hu Q."/>
            <person name="Zhang X."/>
            <person name="Zhang W."/>
            <person name="Wang L."/>
            <person name="Ding C."/>
            <person name="Sheng H."/>
            <person name="Gu J."/>
            <person name="Chen S."/>
            <person name="Ni L."/>
            <person name="Zhu F."/>
            <person name="Chen W."/>
            <person name="Lan L."/>
            <person name="Lai Y."/>
            <person name="Cheng Z."/>
            <person name="Gu M."/>
            <person name="Jiang J."/>
            <person name="Li J."/>
            <person name="Hong G."/>
            <person name="Xue Y."/>
            <person name="Han B."/>
        </authorList>
    </citation>
    <scope>NUCLEOTIDE SEQUENCE [LARGE SCALE GENOMIC DNA]</scope>
    <source>
        <strain>cv. Nipponbare</strain>
    </source>
</reference>
<reference key="3">
    <citation type="journal article" date="2005" name="Nature">
        <title>The map-based sequence of the rice genome.</title>
        <authorList>
            <consortium name="International rice genome sequencing project (IRGSP)"/>
        </authorList>
    </citation>
    <scope>NUCLEOTIDE SEQUENCE [LARGE SCALE GENOMIC DNA]</scope>
    <source>
        <strain>cv. Nipponbare</strain>
    </source>
</reference>
<reference key="4">
    <citation type="journal article" date="2008" name="Nucleic Acids Res.">
        <title>The rice annotation project database (RAP-DB): 2008 update.</title>
        <authorList>
            <consortium name="The rice annotation project (RAP)"/>
        </authorList>
    </citation>
    <scope>GENOME REANNOTATION</scope>
    <source>
        <strain>cv. Nipponbare</strain>
    </source>
</reference>
<reference key="5">
    <citation type="journal article" date="2013" name="Rice">
        <title>Improvement of the Oryza sativa Nipponbare reference genome using next generation sequence and optical map data.</title>
        <authorList>
            <person name="Kawahara Y."/>
            <person name="de la Bastide M."/>
            <person name="Hamilton J.P."/>
            <person name="Kanamori H."/>
            <person name="McCombie W.R."/>
            <person name="Ouyang S."/>
            <person name="Schwartz D.C."/>
            <person name="Tanaka T."/>
            <person name="Wu J."/>
            <person name="Zhou S."/>
            <person name="Childs K.L."/>
            <person name="Davidson R.M."/>
            <person name="Lin H."/>
            <person name="Quesada-Ocampo L."/>
            <person name="Vaillancourt B."/>
            <person name="Sakai H."/>
            <person name="Lee S.S."/>
            <person name="Kim J."/>
            <person name="Numa H."/>
            <person name="Itoh T."/>
            <person name="Buell C.R."/>
            <person name="Matsumoto T."/>
        </authorList>
    </citation>
    <scope>GENOME REANNOTATION</scope>
    <source>
        <strain>cv. Nipponbare</strain>
    </source>
</reference>
<reference key="6">
    <citation type="journal article" date="2005" name="PLoS Biol.">
        <title>The genomes of Oryza sativa: a history of duplications.</title>
        <authorList>
            <person name="Yu J."/>
            <person name="Wang J."/>
            <person name="Lin W."/>
            <person name="Li S."/>
            <person name="Li H."/>
            <person name="Zhou J."/>
            <person name="Ni P."/>
            <person name="Dong W."/>
            <person name="Hu S."/>
            <person name="Zeng C."/>
            <person name="Zhang J."/>
            <person name="Zhang Y."/>
            <person name="Li R."/>
            <person name="Xu Z."/>
            <person name="Li S."/>
            <person name="Li X."/>
            <person name="Zheng H."/>
            <person name="Cong L."/>
            <person name="Lin L."/>
            <person name="Yin J."/>
            <person name="Geng J."/>
            <person name="Li G."/>
            <person name="Shi J."/>
            <person name="Liu J."/>
            <person name="Lv H."/>
            <person name="Li J."/>
            <person name="Wang J."/>
            <person name="Deng Y."/>
            <person name="Ran L."/>
            <person name="Shi X."/>
            <person name="Wang X."/>
            <person name="Wu Q."/>
            <person name="Li C."/>
            <person name="Ren X."/>
            <person name="Wang J."/>
            <person name="Wang X."/>
            <person name="Li D."/>
            <person name="Liu D."/>
            <person name="Zhang X."/>
            <person name="Ji Z."/>
            <person name="Zhao W."/>
            <person name="Sun Y."/>
            <person name="Zhang Z."/>
            <person name="Bao J."/>
            <person name="Han Y."/>
            <person name="Dong L."/>
            <person name="Ji J."/>
            <person name="Chen P."/>
            <person name="Wu S."/>
            <person name="Liu J."/>
            <person name="Xiao Y."/>
            <person name="Bu D."/>
            <person name="Tan J."/>
            <person name="Yang L."/>
            <person name="Ye C."/>
            <person name="Zhang J."/>
            <person name="Xu J."/>
            <person name="Zhou Y."/>
            <person name="Yu Y."/>
            <person name="Zhang B."/>
            <person name="Zhuang S."/>
            <person name="Wei H."/>
            <person name="Liu B."/>
            <person name="Lei M."/>
            <person name="Yu H."/>
            <person name="Li Y."/>
            <person name="Xu H."/>
            <person name="Wei S."/>
            <person name="He X."/>
            <person name="Fang L."/>
            <person name="Zhang Z."/>
            <person name="Zhang Y."/>
            <person name="Huang X."/>
            <person name="Su Z."/>
            <person name="Tong W."/>
            <person name="Li J."/>
            <person name="Tong Z."/>
            <person name="Li S."/>
            <person name="Ye J."/>
            <person name="Wang L."/>
            <person name="Fang L."/>
            <person name="Lei T."/>
            <person name="Chen C.-S."/>
            <person name="Chen H.-C."/>
            <person name="Xu Z."/>
            <person name="Li H."/>
            <person name="Huang H."/>
            <person name="Zhang F."/>
            <person name="Xu H."/>
            <person name="Li N."/>
            <person name="Zhao C."/>
            <person name="Li S."/>
            <person name="Dong L."/>
            <person name="Huang Y."/>
            <person name="Li L."/>
            <person name="Xi Y."/>
            <person name="Qi Q."/>
            <person name="Li W."/>
            <person name="Zhang B."/>
            <person name="Hu W."/>
            <person name="Zhang Y."/>
            <person name="Tian X."/>
            <person name="Jiao Y."/>
            <person name="Liang X."/>
            <person name="Jin J."/>
            <person name="Gao L."/>
            <person name="Zheng W."/>
            <person name="Hao B."/>
            <person name="Liu S.-M."/>
            <person name="Wang W."/>
            <person name="Yuan L."/>
            <person name="Cao M."/>
            <person name="McDermott J."/>
            <person name="Samudrala R."/>
            <person name="Wang J."/>
            <person name="Wong G.K.-S."/>
            <person name="Yang H."/>
        </authorList>
    </citation>
    <scope>NUCLEOTIDE SEQUENCE [LARGE SCALE GENOMIC DNA]</scope>
    <source>
        <strain>cv. Nipponbare</strain>
    </source>
</reference>
<reference key="7">
    <citation type="journal article" date="2003" name="Science">
        <title>Collection, mapping, and annotation of over 28,000 cDNA clones from japonica rice.</title>
        <authorList>
            <consortium name="The rice full-length cDNA consortium"/>
        </authorList>
    </citation>
    <scope>NUCLEOTIDE SEQUENCE [LARGE SCALE MRNA]</scope>
    <source>
        <strain>cv. Nipponbare</strain>
    </source>
</reference>
<reference key="8">
    <citation type="journal article" date="2006" name="Nat. Biotechnol.">
        <title>Erect leaves caused by brassinosteroid deficiency increase biomass production and grain yield in rice.</title>
        <authorList>
            <person name="Sakamoto T."/>
            <person name="Morinaka Y."/>
            <person name="Ohnishi T."/>
            <person name="Sunohara H."/>
            <person name="Fujioka S."/>
            <person name="Ueguchi-Tanaka M."/>
            <person name="Mizutani M."/>
            <person name="Sakata K."/>
            <person name="Takatsuto S."/>
            <person name="Yoshida S."/>
            <person name="Tanaka H."/>
            <person name="Kitano H."/>
            <person name="Matsuoka M."/>
        </authorList>
    </citation>
    <scope>FUNCTION</scope>
    <scope>CATALYTIC ACTIVITY</scope>
    <scope>PATHWAY</scope>
    <source>
        <strain>cv. Nipponbare</strain>
    </source>
</reference>
<evidence type="ECO:0000250" key="1">
    <source>
        <dbReference type="UniProtKB" id="P04798"/>
    </source>
</evidence>
<evidence type="ECO:0000255" key="2"/>
<evidence type="ECO:0000269" key="3">
    <source>
    </source>
</evidence>
<evidence type="ECO:0000269" key="4">
    <source>
    </source>
</evidence>
<evidence type="ECO:0000303" key="5">
    <source>
    </source>
</evidence>
<evidence type="ECO:0000303" key="6">
    <source>
    </source>
</evidence>
<evidence type="ECO:0000305" key="7"/>
<evidence type="ECO:0000312" key="8">
    <source>
        <dbReference type="EMBL" id="CAE06016.1"/>
    </source>
</evidence>
<evidence type="ECO:0000312" key="9">
    <source>
        <dbReference type="EMBL" id="CAH67041.1"/>
    </source>
</evidence>
<evidence type="ECO:0000312" key="10">
    <source>
        <dbReference type="EMBL" id="EEE61161.1"/>
    </source>
</evidence>